<reference key="1">
    <citation type="submission" date="2006-01" db="EMBL/GenBank/DDBJ databases">
        <title>A comparison of the first two published chloroplast genomes in Asteraceae: Lactuca and Helianthus.</title>
        <authorList>
            <person name="Timme R.E."/>
            <person name="Kuehl J.V."/>
            <person name="Boore J.L."/>
            <person name="Jansen R.K."/>
        </authorList>
    </citation>
    <scope>NUCLEOTIDE SEQUENCE [LARGE SCALE GENOMIC DNA]</scope>
    <source>
        <strain>cv. HA383</strain>
    </source>
</reference>
<dbReference type="EMBL" id="DQ383815">
    <property type="protein sequence ID" value="ABD47178.1"/>
    <property type="molecule type" value="Genomic_DNA"/>
</dbReference>
<dbReference type="RefSeq" id="YP_588150.1">
    <property type="nucleotide sequence ID" value="NC_007977.1"/>
</dbReference>
<dbReference type="SMR" id="Q1KXS6"/>
<dbReference type="EnsemblPlants" id="mRNA:HanXRQr2_Chr11g0500111">
    <property type="protein sequence ID" value="CDS:HanXRQr2_Chr11g0500111.1"/>
    <property type="gene ID" value="HanXRQr2_Chr11g0500111"/>
</dbReference>
<dbReference type="GeneID" id="4055692"/>
<dbReference type="Gramene" id="mRNA:HanXRQr2_Chr11g0500111">
    <property type="protein sequence ID" value="CDS:HanXRQr2_Chr11g0500111.1"/>
    <property type="gene ID" value="HanXRQr2_Chr11g0500111"/>
</dbReference>
<dbReference type="KEGG" id="han:4055692"/>
<dbReference type="OMA" id="FIRNVTP"/>
<dbReference type="OrthoDB" id="535480at2759"/>
<dbReference type="PhylomeDB" id="Q1KXS6"/>
<dbReference type="GO" id="GO:0009507">
    <property type="term" value="C:chloroplast"/>
    <property type="evidence" value="ECO:0007669"/>
    <property type="project" value="UniProtKB-SubCell"/>
</dbReference>
<dbReference type="GO" id="GO:1990904">
    <property type="term" value="C:ribonucleoprotein complex"/>
    <property type="evidence" value="ECO:0007669"/>
    <property type="project" value="UniProtKB-KW"/>
</dbReference>
<dbReference type="GO" id="GO:0005840">
    <property type="term" value="C:ribosome"/>
    <property type="evidence" value="ECO:0007669"/>
    <property type="project" value="UniProtKB-KW"/>
</dbReference>
<dbReference type="GO" id="GO:0019843">
    <property type="term" value="F:rRNA binding"/>
    <property type="evidence" value="ECO:0007669"/>
    <property type="project" value="UniProtKB-UniRule"/>
</dbReference>
<dbReference type="GO" id="GO:0003735">
    <property type="term" value="F:structural constituent of ribosome"/>
    <property type="evidence" value="ECO:0007669"/>
    <property type="project" value="InterPro"/>
</dbReference>
<dbReference type="GO" id="GO:0006412">
    <property type="term" value="P:translation"/>
    <property type="evidence" value="ECO:0007669"/>
    <property type="project" value="UniProtKB-UniRule"/>
</dbReference>
<dbReference type="FunFam" id="3.30.420.80:FF:000003">
    <property type="entry name" value="30S ribosomal protein S11, chloroplastic"/>
    <property type="match status" value="1"/>
</dbReference>
<dbReference type="Gene3D" id="3.30.420.80">
    <property type="entry name" value="Ribosomal protein S11"/>
    <property type="match status" value="1"/>
</dbReference>
<dbReference type="HAMAP" id="MF_01310">
    <property type="entry name" value="Ribosomal_uS11"/>
    <property type="match status" value="1"/>
</dbReference>
<dbReference type="InterPro" id="IPR001971">
    <property type="entry name" value="Ribosomal_uS11"/>
</dbReference>
<dbReference type="InterPro" id="IPR019981">
    <property type="entry name" value="Ribosomal_uS11_bac-type"/>
</dbReference>
<dbReference type="InterPro" id="IPR018102">
    <property type="entry name" value="Ribosomal_uS11_CS"/>
</dbReference>
<dbReference type="InterPro" id="IPR036967">
    <property type="entry name" value="Ribosomal_uS11_sf"/>
</dbReference>
<dbReference type="NCBIfam" id="NF003698">
    <property type="entry name" value="PRK05309.1"/>
    <property type="match status" value="1"/>
</dbReference>
<dbReference type="NCBIfam" id="TIGR03632">
    <property type="entry name" value="uS11_bact"/>
    <property type="match status" value="1"/>
</dbReference>
<dbReference type="PANTHER" id="PTHR11759">
    <property type="entry name" value="40S RIBOSOMAL PROTEIN S14/30S RIBOSOMAL PROTEIN S11"/>
    <property type="match status" value="1"/>
</dbReference>
<dbReference type="Pfam" id="PF00411">
    <property type="entry name" value="Ribosomal_S11"/>
    <property type="match status" value="1"/>
</dbReference>
<dbReference type="PIRSF" id="PIRSF002131">
    <property type="entry name" value="Ribosomal_S11"/>
    <property type="match status" value="1"/>
</dbReference>
<dbReference type="SUPFAM" id="SSF53137">
    <property type="entry name" value="Translational machinery components"/>
    <property type="match status" value="1"/>
</dbReference>
<dbReference type="PROSITE" id="PS00054">
    <property type="entry name" value="RIBOSOMAL_S11"/>
    <property type="match status" value="1"/>
</dbReference>
<keyword id="KW-0150">Chloroplast</keyword>
<keyword id="KW-0934">Plastid</keyword>
<keyword id="KW-0687">Ribonucleoprotein</keyword>
<keyword id="KW-0689">Ribosomal protein</keyword>
<keyword id="KW-0694">RNA-binding</keyword>
<keyword id="KW-0699">rRNA-binding</keyword>
<organism>
    <name type="scientific">Helianthus annuus</name>
    <name type="common">Common sunflower</name>
    <dbReference type="NCBI Taxonomy" id="4232"/>
    <lineage>
        <taxon>Eukaryota</taxon>
        <taxon>Viridiplantae</taxon>
        <taxon>Streptophyta</taxon>
        <taxon>Embryophyta</taxon>
        <taxon>Tracheophyta</taxon>
        <taxon>Spermatophyta</taxon>
        <taxon>Magnoliopsida</taxon>
        <taxon>eudicotyledons</taxon>
        <taxon>Gunneridae</taxon>
        <taxon>Pentapetalae</taxon>
        <taxon>asterids</taxon>
        <taxon>campanulids</taxon>
        <taxon>Asterales</taxon>
        <taxon>Asteraceae</taxon>
        <taxon>Asteroideae</taxon>
        <taxon>Heliantheae alliance</taxon>
        <taxon>Heliantheae</taxon>
        <taxon>Helianthus</taxon>
    </lineage>
</organism>
<name>RR11_HELAN</name>
<gene>
    <name evidence="1" type="primary">rps11</name>
</gene>
<proteinExistence type="inferred from homology"/>
<feature type="chain" id="PRO_0000276648" description="Small ribosomal subunit protein uS11c">
    <location>
        <begin position="1"/>
        <end position="136"/>
    </location>
</feature>
<evidence type="ECO:0000255" key="1">
    <source>
        <dbReference type="HAMAP-Rule" id="MF_01310"/>
    </source>
</evidence>
<evidence type="ECO:0000305" key="2"/>
<protein>
    <recommendedName>
        <fullName evidence="1">Small ribosomal subunit protein uS11c</fullName>
    </recommendedName>
    <alternativeName>
        <fullName evidence="2">30S ribosomal protein S11, chloroplastic</fullName>
    </alternativeName>
</protein>
<accession>Q1KXS6</accession>
<geneLocation type="chloroplast"/>
<comment type="subunit">
    <text evidence="1">Part of the 30S ribosomal subunit.</text>
</comment>
<comment type="subcellular location">
    <subcellularLocation>
        <location>Plastid</location>
        <location>Chloroplast</location>
    </subcellularLocation>
</comment>
<comment type="similarity">
    <text evidence="1">Belongs to the universal ribosomal protein uS11 family.</text>
</comment>
<sequence>MAKAIPKKGSRGRISSRKSIRKIPKGVIHIQASFNNTIVTVTDVRGRVVSWSSAGTCGFQGTRRGTPFAAQTAAANAIRAVVDQGMQRAEVMIKGPGLGRDAALRAIRRSGILLTFVRDVTPMPHNGCRPPKKRRV</sequence>